<comment type="subcellular location">
    <subcellularLocation>
        <location evidence="2">Cell membrane</location>
        <topology evidence="2">Multi-pass membrane protein</topology>
    </subcellularLocation>
</comment>
<name>Y779_METJA</name>
<sequence length="299" mass="33291">MPKYLTTLYKRTIKRNIILFKKLGKDFDEKKFILLLIIIAAIPLLISYYLHLTLKSMIIFVVIYVGAALFIPSILYENKIETLENNIPQALYIMILALESGRSINEALLEVVKSNIKEVSDIFRKVLYLMENQKLSFEESMTIVSNLYDSKVLRMLARIMIENRKYGGDLSDSLKILAKTLEDFKMYKRQLLSVTASGLAIGFIILCGVIPAVAALLGAYLIAVSGMLSGVAPIPPVKPEDISKGFEIVQMGTAIIGALFAIPIFGLKIGRMFLISAVTMTIGVLAYYTILKFAPGIFS</sequence>
<keyword id="KW-1003">Cell membrane</keyword>
<keyword id="KW-0472">Membrane</keyword>
<keyword id="KW-1185">Reference proteome</keyword>
<keyword id="KW-0812">Transmembrane</keyword>
<keyword id="KW-1133">Transmembrane helix</keyword>
<evidence type="ECO:0000255" key="1"/>
<evidence type="ECO:0000305" key="2"/>
<protein>
    <recommendedName>
        <fullName>Uncharacterized protein MJ0779</fullName>
    </recommendedName>
</protein>
<gene>
    <name type="ordered locus">MJ0779</name>
</gene>
<reference key="1">
    <citation type="journal article" date="1996" name="Science">
        <title>Complete genome sequence of the methanogenic archaeon, Methanococcus jannaschii.</title>
        <authorList>
            <person name="Bult C.J."/>
            <person name="White O."/>
            <person name="Olsen G.J."/>
            <person name="Zhou L."/>
            <person name="Fleischmann R.D."/>
            <person name="Sutton G.G."/>
            <person name="Blake J.A."/>
            <person name="FitzGerald L.M."/>
            <person name="Clayton R.A."/>
            <person name="Gocayne J.D."/>
            <person name="Kerlavage A.R."/>
            <person name="Dougherty B.A."/>
            <person name="Tomb J.-F."/>
            <person name="Adams M.D."/>
            <person name="Reich C.I."/>
            <person name="Overbeek R."/>
            <person name="Kirkness E.F."/>
            <person name="Weinstock K.G."/>
            <person name="Merrick J.M."/>
            <person name="Glodek A."/>
            <person name="Scott J.L."/>
            <person name="Geoghagen N.S.M."/>
            <person name="Weidman J.F."/>
            <person name="Fuhrmann J.L."/>
            <person name="Nguyen D."/>
            <person name="Utterback T.R."/>
            <person name="Kelley J.M."/>
            <person name="Peterson J.D."/>
            <person name="Sadow P.W."/>
            <person name="Hanna M.C."/>
            <person name="Cotton M.D."/>
            <person name="Roberts K.M."/>
            <person name="Hurst M.A."/>
            <person name="Kaine B.P."/>
            <person name="Borodovsky M."/>
            <person name="Klenk H.-P."/>
            <person name="Fraser C.M."/>
            <person name="Smith H.O."/>
            <person name="Woese C.R."/>
            <person name="Venter J.C."/>
        </authorList>
    </citation>
    <scope>NUCLEOTIDE SEQUENCE [LARGE SCALE GENOMIC DNA]</scope>
    <source>
        <strain>ATCC 43067 / DSM 2661 / JAL-1 / JCM 10045 / NBRC 100440</strain>
    </source>
</reference>
<proteinExistence type="predicted"/>
<accession>Q58189</accession>
<feature type="chain" id="PRO_0000107030" description="Uncharacterized protein MJ0779">
    <location>
        <begin position="1"/>
        <end position="299"/>
    </location>
</feature>
<feature type="transmembrane region" description="Helical" evidence="1">
    <location>
        <begin position="32"/>
        <end position="52"/>
    </location>
</feature>
<feature type="transmembrane region" description="Helical" evidence="1">
    <location>
        <begin position="56"/>
        <end position="76"/>
    </location>
</feature>
<feature type="transmembrane region" description="Helical" evidence="1">
    <location>
        <begin position="199"/>
        <end position="219"/>
    </location>
</feature>
<feature type="transmembrane region" description="Helical" evidence="1">
    <location>
        <begin position="220"/>
        <end position="240"/>
    </location>
</feature>
<feature type="transmembrane region" description="Helical" evidence="1">
    <location>
        <begin position="246"/>
        <end position="266"/>
    </location>
</feature>
<feature type="transmembrane region" description="Helical" evidence="1">
    <location>
        <begin position="273"/>
        <end position="293"/>
    </location>
</feature>
<organism>
    <name type="scientific">Methanocaldococcus jannaschii (strain ATCC 43067 / DSM 2661 / JAL-1 / JCM 10045 / NBRC 100440)</name>
    <name type="common">Methanococcus jannaschii</name>
    <dbReference type="NCBI Taxonomy" id="243232"/>
    <lineage>
        <taxon>Archaea</taxon>
        <taxon>Methanobacteriati</taxon>
        <taxon>Methanobacteriota</taxon>
        <taxon>Methanomada group</taxon>
        <taxon>Methanococci</taxon>
        <taxon>Methanococcales</taxon>
        <taxon>Methanocaldococcaceae</taxon>
        <taxon>Methanocaldococcus</taxon>
    </lineage>
</organism>
<dbReference type="EMBL" id="L77117">
    <property type="protein sequence ID" value="AAB98769.1"/>
    <property type="molecule type" value="Genomic_DNA"/>
</dbReference>
<dbReference type="PIR" id="C64397">
    <property type="entry name" value="C64397"/>
</dbReference>
<dbReference type="RefSeq" id="WP_010870284.1">
    <property type="nucleotide sequence ID" value="NC_000909.1"/>
</dbReference>
<dbReference type="SMR" id="Q58189"/>
<dbReference type="STRING" id="243232.MJ_0779"/>
<dbReference type="PaxDb" id="243232-MJ_0779"/>
<dbReference type="EnsemblBacteria" id="AAB98769">
    <property type="protein sequence ID" value="AAB98769"/>
    <property type="gene ID" value="MJ_0779"/>
</dbReference>
<dbReference type="GeneID" id="1451656"/>
<dbReference type="KEGG" id="mja:MJ_0779"/>
<dbReference type="eggNOG" id="arCOG01811">
    <property type="taxonomic scope" value="Archaea"/>
</dbReference>
<dbReference type="HOGENOM" id="CLU_929424_0_0_2"/>
<dbReference type="InParanoid" id="Q58189"/>
<dbReference type="OrthoDB" id="60490at2157"/>
<dbReference type="PhylomeDB" id="Q58189"/>
<dbReference type="Proteomes" id="UP000000805">
    <property type="component" value="Chromosome"/>
</dbReference>
<dbReference type="GO" id="GO:0005886">
    <property type="term" value="C:plasma membrane"/>
    <property type="evidence" value="ECO:0007669"/>
    <property type="project" value="UniProtKB-SubCell"/>
</dbReference>
<dbReference type="InterPro" id="IPR018076">
    <property type="entry name" value="T2SS_GspF_dom"/>
</dbReference>
<dbReference type="PANTHER" id="PTHR35007">
    <property type="entry name" value="INTEGRAL MEMBRANE PROTEIN-RELATED"/>
    <property type="match status" value="1"/>
</dbReference>
<dbReference type="PANTHER" id="PTHR35007:SF2">
    <property type="entry name" value="PILUS ASSEMBLE PROTEIN"/>
    <property type="match status" value="1"/>
</dbReference>
<dbReference type="Pfam" id="PF00482">
    <property type="entry name" value="T2SSF"/>
    <property type="match status" value="1"/>
</dbReference>